<protein>
    <recommendedName>
        <fullName evidence="1">Pyridoxine/pyridoxamine 5'-phosphate oxidase</fullName>
        <ecNumber evidence="1">1.4.3.5</ecNumber>
    </recommendedName>
    <alternativeName>
        <fullName evidence="1">PNP/PMP oxidase</fullName>
        <shortName evidence="1">PNPOx</shortName>
    </alternativeName>
    <alternativeName>
        <fullName evidence="1">Pyridoxal 5'-phosphate synthase</fullName>
    </alternativeName>
</protein>
<proteinExistence type="inferred from homology"/>
<reference key="1">
    <citation type="journal article" date="2004" name="Nat. Genet.">
        <title>Comparison of genome degradation in Paratyphi A and Typhi, human-restricted serovars of Salmonella enterica that cause typhoid.</title>
        <authorList>
            <person name="McClelland M."/>
            <person name="Sanderson K.E."/>
            <person name="Clifton S.W."/>
            <person name="Latreille P."/>
            <person name="Porwollik S."/>
            <person name="Sabo A."/>
            <person name="Meyer R."/>
            <person name="Bieri T."/>
            <person name="Ozersky P."/>
            <person name="McLellan M."/>
            <person name="Harkins C.R."/>
            <person name="Wang C."/>
            <person name="Nguyen C."/>
            <person name="Berghoff A."/>
            <person name="Elliott G."/>
            <person name="Kohlberg S."/>
            <person name="Strong C."/>
            <person name="Du F."/>
            <person name="Carter J."/>
            <person name="Kremizki C."/>
            <person name="Layman D."/>
            <person name="Leonard S."/>
            <person name="Sun H."/>
            <person name="Fulton L."/>
            <person name="Nash W."/>
            <person name="Miner T."/>
            <person name="Minx P."/>
            <person name="Delehaunty K."/>
            <person name="Fronick C."/>
            <person name="Magrini V."/>
            <person name="Nhan M."/>
            <person name="Warren W."/>
            <person name="Florea L."/>
            <person name="Spieth J."/>
            <person name="Wilson R.K."/>
        </authorList>
    </citation>
    <scope>NUCLEOTIDE SEQUENCE [LARGE SCALE GENOMIC DNA]</scope>
    <source>
        <strain>ATCC 9150 / SARB42</strain>
    </source>
</reference>
<sequence length="218" mass="25499">MSDNDQLQQIAHLRREYTKGGLRRRDLPAEPLTLFERWLGQACDARLADPTAMVVATVDDKGQPYQRIVLLKHYDEKGLVFYTNLGSRKAHQIEHNPRISLLFPWHMLERQVMVTGKAERLSTLEVVRYFHSRPRDSQIGAWVSKQSSRISARGILESKFLELKQKFQQGEVPLPSFWGGFRVSIEQMEFWQGGEHRLHDRFLYQRDDGAWKIDRLAP</sequence>
<comment type="function">
    <text evidence="1">Catalyzes the oxidation of either pyridoxine 5'-phosphate (PNP) or pyridoxamine 5'-phosphate (PMP) into pyridoxal 5'-phosphate (PLP).</text>
</comment>
<comment type="catalytic activity">
    <reaction evidence="1">
        <text>pyridoxamine 5'-phosphate + O2 + H2O = pyridoxal 5'-phosphate + H2O2 + NH4(+)</text>
        <dbReference type="Rhea" id="RHEA:15817"/>
        <dbReference type="ChEBI" id="CHEBI:15377"/>
        <dbReference type="ChEBI" id="CHEBI:15379"/>
        <dbReference type="ChEBI" id="CHEBI:16240"/>
        <dbReference type="ChEBI" id="CHEBI:28938"/>
        <dbReference type="ChEBI" id="CHEBI:58451"/>
        <dbReference type="ChEBI" id="CHEBI:597326"/>
        <dbReference type="EC" id="1.4.3.5"/>
    </reaction>
</comment>
<comment type="catalytic activity">
    <reaction evidence="1">
        <text>pyridoxine 5'-phosphate + O2 = pyridoxal 5'-phosphate + H2O2</text>
        <dbReference type="Rhea" id="RHEA:15149"/>
        <dbReference type="ChEBI" id="CHEBI:15379"/>
        <dbReference type="ChEBI" id="CHEBI:16240"/>
        <dbReference type="ChEBI" id="CHEBI:58589"/>
        <dbReference type="ChEBI" id="CHEBI:597326"/>
        <dbReference type="EC" id="1.4.3.5"/>
    </reaction>
</comment>
<comment type="cofactor">
    <cofactor evidence="1">
        <name>FMN</name>
        <dbReference type="ChEBI" id="CHEBI:58210"/>
    </cofactor>
    <text evidence="1">Binds 1 FMN per subunit.</text>
</comment>
<comment type="pathway">
    <text evidence="1">Cofactor metabolism; pyridoxal 5'-phosphate salvage; pyridoxal 5'-phosphate from pyridoxamine 5'-phosphate: step 1/1.</text>
</comment>
<comment type="pathway">
    <text evidence="1">Cofactor metabolism; pyridoxal 5'-phosphate salvage; pyridoxal 5'-phosphate from pyridoxine 5'-phosphate: step 1/1.</text>
</comment>
<comment type="subunit">
    <text evidence="1">Homodimer.</text>
</comment>
<comment type="similarity">
    <text evidence="1">Belongs to the pyridoxamine 5'-phosphate oxidase family.</text>
</comment>
<name>PDXH_SALPA</name>
<evidence type="ECO:0000255" key="1">
    <source>
        <dbReference type="HAMAP-Rule" id="MF_01629"/>
    </source>
</evidence>
<gene>
    <name evidence="1" type="primary">pdxH</name>
    <name type="ordered locus">SPA1405</name>
</gene>
<accession>Q5PIK6</accession>
<organism>
    <name type="scientific">Salmonella paratyphi A (strain ATCC 9150 / SARB42)</name>
    <dbReference type="NCBI Taxonomy" id="295319"/>
    <lineage>
        <taxon>Bacteria</taxon>
        <taxon>Pseudomonadati</taxon>
        <taxon>Pseudomonadota</taxon>
        <taxon>Gammaproteobacteria</taxon>
        <taxon>Enterobacterales</taxon>
        <taxon>Enterobacteriaceae</taxon>
        <taxon>Salmonella</taxon>
    </lineage>
</organism>
<feature type="chain" id="PRO_0000167751" description="Pyridoxine/pyridoxamine 5'-phosphate oxidase">
    <location>
        <begin position="1"/>
        <end position="218"/>
    </location>
</feature>
<feature type="binding site" evidence="1">
    <location>
        <begin position="14"/>
        <end position="17"/>
    </location>
    <ligand>
        <name>substrate</name>
    </ligand>
</feature>
<feature type="binding site" evidence="1">
    <location>
        <begin position="67"/>
        <end position="72"/>
    </location>
    <ligand>
        <name>FMN</name>
        <dbReference type="ChEBI" id="CHEBI:58210"/>
    </ligand>
</feature>
<feature type="binding site" evidence="1">
    <location>
        <position position="72"/>
    </location>
    <ligand>
        <name>substrate</name>
    </ligand>
</feature>
<feature type="binding site" evidence="1">
    <location>
        <begin position="82"/>
        <end position="83"/>
    </location>
    <ligand>
        <name>FMN</name>
        <dbReference type="ChEBI" id="CHEBI:58210"/>
    </ligand>
</feature>
<feature type="binding site" evidence="1">
    <location>
        <position position="88"/>
    </location>
    <ligand>
        <name>FMN</name>
        <dbReference type="ChEBI" id="CHEBI:58210"/>
    </ligand>
</feature>
<feature type="binding site" evidence="1">
    <location>
        <position position="89"/>
    </location>
    <ligand>
        <name>FMN</name>
        <dbReference type="ChEBI" id="CHEBI:58210"/>
    </ligand>
</feature>
<feature type="binding site" evidence="1">
    <location>
        <position position="111"/>
    </location>
    <ligand>
        <name>FMN</name>
        <dbReference type="ChEBI" id="CHEBI:58210"/>
    </ligand>
</feature>
<feature type="binding site" evidence="1">
    <location>
        <position position="129"/>
    </location>
    <ligand>
        <name>substrate</name>
    </ligand>
</feature>
<feature type="binding site" evidence="1">
    <location>
        <position position="133"/>
    </location>
    <ligand>
        <name>substrate</name>
    </ligand>
</feature>
<feature type="binding site" evidence="1">
    <location>
        <position position="137"/>
    </location>
    <ligand>
        <name>substrate</name>
    </ligand>
</feature>
<feature type="binding site" evidence="1">
    <location>
        <begin position="146"/>
        <end position="147"/>
    </location>
    <ligand>
        <name>FMN</name>
        <dbReference type="ChEBI" id="CHEBI:58210"/>
    </ligand>
</feature>
<feature type="binding site" evidence="1">
    <location>
        <position position="191"/>
    </location>
    <ligand>
        <name>FMN</name>
        <dbReference type="ChEBI" id="CHEBI:58210"/>
    </ligand>
</feature>
<feature type="binding site" evidence="1">
    <location>
        <begin position="197"/>
        <end position="199"/>
    </location>
    <ligand>
        <name>substrate</name>
    </ligand>
</feature>
<feature type="binding site" evidence="1">
    <location>
        <position position="201"/>
    </location>
    <ligand>
        <name>FMN</name>
        <dbReference type="ChEBI" id="CHEBI:58210"/>
    </ligand>
</feature>
<dbReference type="EC" id="1.4.3.5" evidence="1"/>
<dbReference type="EMBL" id="CP000026">
    <property type="protein sequence ID" value="AAV77346.1"/>
    <property type="molecule type" value="Genomic_DNA"/>
</dbReference>
<dbReference type="RefSeq" id="WP_001282334.1">
    <property type="nucleotide sequence ID" value="NC_006511.1"/>
</dbReference>
<dbReference type="SMR" id="Q5PIK6"/>
<dbReference type="KEGG" id="spt:SPA1405"/>
<dbReference type="HOGENOM" id="CLU_032263_2_2_6"/>
<dbReference type="UniPathway" id="UPA01068">
    <property type="reaction ID" value="UER00304"/>
</dbReference>
<dbReference type="UniPathway" id="UPA01068">
    <property type="reaction ID" value="UER00305"/>
</dbReference>
<dbReference type="Proteomes" id="UP000008185">
    <property type="component" value="Chromosome"/>
</dbReference>
<dbReference type="GO" id="GO:0010181">
    <property type="term" value="F:FMN binding"/>
    <property type="evidence" value="ECO:0007669"/>
    <property type="project" value="UniProtKB-UniRule"/>
</dbReference>
<dbReference type="GO" id="GO:0004733">
    <property type="term" value="F:pyridoxamine phosphate oxidase activity"/>
    <property type="evidence" value="ECO:0007669"/>
    <property type="project" value="UniProtKB-UniRule"/>
</dbReference>
<dbReference type="GO" id="GO:0008615">
    <property type="term" value="P:pyridoxine biosynthetic process"/>
    <property type="evidence" value="ECO:0007669"/>
    <property type="project" value="UniProtKB-KW"/>
</dbReference>
<dbReference type="FunFam" id="2.30.110.10:FF:000001">
    <property type="entry name" value="Pyridoxine/pyridoxamine 5'-phosphate oxidase"/>
    <property type="match status" value="1"/>
</dbReference>
<dbReference type="Gene3D" id="2.30.110.10">
    <property type="entry name" value="Electron Transport, Fmn-binding Protein, Chain A"/>
    <property type="match status" value="1"/>
</dbReference>
<dbReference type="HAMAP" id="MF_01629">
    <property type="entry name" value="PdxH"/>
    <property type="match status" value="1"/>
</dbReference>
<dbReference type="InterPro" id="IPR000659">
    <property type="entry name" value="Pyridox_Oxase"/>
</dbReference>
<dbReference type="InterPro" id="IPR019740">
    <property type="entry name" value="Pyridox_Oxase_CS"/>
</dbReference>
<dbReference type="InterPro" id="IPR011576">
    <property type="entry name" value="Pyridox_Oxase_N"/>
</dbReference>
<dbReference type="InterPro" id="IPR019576">
    <property type="entry name" value="Pyridoxamine_oxidase_dimer_C"/>
</dbReference>
<dbReference type="InterPro" id="IPR012349">
    <property type="entry name" value="Split_barrel_FMN-bd"/>
</dbReference>
<dbReference type="NCBIfam" id="TIGR00558">
    <property type="entry name" value="pdxH"/>
    <property type="match status" value="1"/>
</dbReference>
<dbReference type="NCBIfam" id="NF004231">
    <property type="entry name" value="PRK05679.1"/>
    <property type="match status" value="1"/>
</dbReference>
<dbReference type="PANTHER" id="PTHR10851:SF0">
    <property type="entry name" value="PYRIDOXINE-5'-PHOSPHATE OXIDASE"/>
    <property type="match status" value="1"/>
</dbReference>
<dbReference type="PANTHER" id="PTHR10851">
    <property type="entry name" value="PYRIDOXINE-5-PHOSPHATE OXIDASE"/>
    <property type="match status" value="1"/>
</dbReference>
<dbReference type="Pfam" id="PF10590">
    <property type="entry name" value="PNP_phzG_C"/>
    <property type="match status" value="1"/>
</dbReference>
<dbReference type="Pfam" id="PF01243">
    <property type="entry name" value="PNPOx_N"/>
    <property type="match status" value="1"/>
</dbReference>
<dbReference type="PIRSF" id="PIRSF000190">
    <property type="entry name" value="Pyd_amn-ph_oxd"/>
    <property type="match status" value="1"/>
</dbReference>
<dbReference type="SUPFAM" id="SSF50475">
    <property type="entry name" value="FMN-binding split barrel"/>
    <property type="match status" value="1"/>
</dbReference>
<dbReference type="PROSITE" id="PS01064">
    <property type="entry name" value="PYRIDOX_OXIDASE"/>
    <property type="match status" value="1"/>
</dbReference>
<keyword id="KW-0285">Flavoprotein</keyword>
<keyword id="KW-0288">FMN</keyword>
<keyword id="KW-0560">Oxidoreductase</keyword>
<keyword id="KW-0664">Pyridoxine biosynthesis</keyword>